<protein>
    <recommendedName>
        <fullName>NADH-ubiquinone oxidoreductase chain 2</fullName>
        <ecNumber>7.1.1.2</ecNumber>
    </recommendedName>
    <alternativeName>
        <fullName>NADH dehydrogenase subunit 2</fullName>
    </alternativeName>
</protein>
<name>NU2M_CANAL</name>
<organism>
    <name type="scientific">Candida albicans (strain SC5314 / ATCC MYA-2876)</name>
    <name type="common">Yeast</name>
    <dbReference type="NCBI Taxonomy" id="237561"/>
    <lineage>
        <taxon>Eukaryota</taxon>
        <taxon>Fungi</taxon>
        <taxon>Dikarya</taxon>
        <taxon>Ascomycota</taxon>
        <taxon>Saccharomycotina</taxon>
        <taxon>Pichiomycetes</taxon>
        <taxon>Debaryomycetaceae</taxon>
        <taxon>Candida/Lodderomyces clade</taxon>
        <taxon>Candida</taxon>
    </lineage>
</organism>
<reference key="1">
    <citation type="journal article" date="2001" name="J. Bacteriol.">
        <title>Infrequent genetic exchange and recombination in the mitochondrial genome of Candida albicans.</title>
        <authorList>
            <person name="Anderson J.B."/>
            <person name="Wickens C."/>
            <person name="Khan M."/>
            <person name="Cowen L.E."/>
            <person name="Federspiel N.A."/>
            <person name="Jones T."/>
            <person name="Kohn L.M."/>
        </authorList>
    </citation>
    <scope>NUCLEOTIDE SEQUENCE [LARGE SCALE GENOMIC DNA]</scope>
    <source>
        <strain>SC5314 / ATCC MYA-2876</strain>
    </source>
</reference>
<keyword id="KW-0249">Electron transport</keyword>
<keyword id="KW-0472">Membrane</keyword>
<keyword id="KW-0496">Mitochondrion</keyword>
<keyword id="KW-0999">Mitochondrion inner membrane</keyword>
<keyword id="KW-0520">NAD</keyword>
<keyword id="KW-1185">Reference proteome</keyword>
<keyword id="KW-0679">Respiratory chain</keyword>
<keyword id="KW-1278">Translocase</keyword>
<keyword id="KW-0812">Transmembrane</keyword>
<keyword id="KW-1133">Transmembrane helix</keyword>
<keyword id="KW-0813">Transport</keyword>
<keyword id="KW-0830">Ubiquinone</keyword>
<dbReference type="EC" id="7.1.1.2"/>
<dbReference type="EMBL" id="AF285261">
    <property type="protein sequence ID" value="AAG59594.2"/>
    <property type="molecule type" value="Genomic_DNA"/>
</dbReference>
<dbReference type="RefSeq" id="NP_075037.2">
    <property type="nucleotide sequence ID" value="NC_002653.1"/>
</dbReference>
<dbReference type="SMR" id="Q9B8D2"/>
<dbReference type="STRING" id="237561.Q9B8D2"/>
<dbReference type="EnsemblFungi" id="CM_00310W-T">
    <property type="protein sequence ID" value="CM_00310W-T-p1"/>
    <property type="gene ID" value="CM_00310W"/>
</dbReference>
<dbReference type="GeneID" id="802559"/>
<dbReference type="KEGG" id="cal:CaalfMp09"/>
<dbReference type="CGD" id="CAL0000182977">
    <property type="gene designation" value="NAD2"/>
</dbReference>
<dbReference type="VEuPathDB" id="FungiDB:CM_00310W"/>
<dbReference type="InParanoid" id="Q9B8D2"/>
<dbReference type="Proteomes" id="UP000000559">
    <property type="component" value="Mitochondrion"/>
</dbReference>
<dbReference type="GO" id="GO:0005743">
    <property type="term" value="C:mitochondrial inner membrane"/>
    <property type="evidence" value="ECO:0007669"/>
    <property type="project" value="UniProtKB-SubCell"/>
</dbReference>
<dbReference type="GO" id="GO:0045271">
    <property type="term" value="C:respiratory chain complex I"/>
    <property type="evidence" value="ECO:0000250"/>
    <property type="project" value="CGD"/>
</dbReference>
<dbReference type="GO" id="GO:0008137">
    <property type="term" value="F:NADH dehydrogenase (ubiquinone) activity"/>
    <property type="evidence" value="ECO:0000250"/>
    <property type="project" value="CGD"/>
</dbReference>
<dbReference type="GO" id="GO:0006120">
    <property type="term" value="P:mitochondrial electron transport, NADH to ubiquinone"/>
    <property type="evidence" value="ECO:0000250"/>
    <property type="project" value="CGD"/>
</dbReference>
<dbReference type="InterPro" id="IPR001750">
    <property type="entry name" value="ND/Mrp_TM"/>
</dbReference>
<dbReference type="PANTHER" id="PTHR22773">
    <property type="entry name" value="NADH DEHYDROGENASE"/>
    <property type="match status" value="1"/>
</dbReference>
<dbReference type="Pfam" id="PF00361">
    <property type="entry name" value="Proton_antipo_M"/>
    <property type="match status" value="1"/>
</dbReference>
<proteinExistence type="inferred from homology"/>
<feature type="chain" id="PRO_0000356876" description="NADH-ubiquinone oxidoreductase chain 2">
    <location>
        <begin position="1"/>
        <end position="475"/>
    </location>
</feature>
<feature type="transmembrane region" description="Helical" evidence="2">
    <location>
        <begin position="45"/>
        <end position="65"/>
    </location>
</feature>
<feature type="transmembrane region" description="Helical" evidence="2">
    <location>
        <begin position="82"/>
        <end position="102"/>
    </location>
</feature>
<feature type="transmembrane region" description="Helical" evidence="2">
    <location>
        <begin position="112"/>
        <end position="132"/>
    </location>
</feature>
<feature type="transmembrane region" description="Helical" evidence="2">
    <location>
        <begin position="133"/>
        <end position="153"/>
    </location>
</feature>
<feature type="transmembrane region" description="Helical" evidence="2">
    <location>
        <begin position="162"/>
        <end position="182"/>
    </location>
</feature>
<feature type="transmembrane region" description="Helical" evidence="2">
    <location>
        <begin position="198"/>
        <end position="220"/>
    </location>
</feature>
<feature type="transmembrane region" description="Helical" evidence="2">
    <location>
        <begin position="240"/>
        <end position="260"/>
    </location>
</feature>
<feature type="transmembrane region" description="Helical" evidence="2">
    <location>
        <begin position="262"/>
        <end position="282"/>
    </location>
</feature>
<feature type="transmembrane region" description="Helical" evidence="2">
    <location>
        <begin position="291"/>
        <end position="311"/>
    </location>
</feature>
<feature type="transmembrane region" description="Helical" evidence="2">
    <location>
        <begin position="318"/>
        <end position="338"/>
    </location>
</feature>
<feature type="transmembrane region" description="Helical" evidence="2">
    <location>
        <begin position="365"/>
        <end position="385"/>
    </location>
</feature>
<feature type="transmembrane region" description="Helical" evidence="2">
    <location>
        <begin position="402"/>
        <end position="422"/>
    </location>
</feature>
<feature type="transmembrane region" description="Helical" evidence="2">
    <location>
        <begin position="447"/>
        <end position="467"/>
    </location>
</feature>
<geneLocation type="mitochondrion"/>
<evidence type="ECO:0000250" key="1"/>
<evidence type="ECO:0000255" key="2"/>
<evidence type="ECO:0000305" key="3"/>
<evidence type="ECO:0000312" key="4">
    <source>
        <dbReference type="CGD" id="CAL0000182977"/>
    </source>
</evidence>
<sequence>MVVHITTDNDIGVRITLRRMLLLTLVTYIVYIAYNQRDILHINRLAVLALSFVAYLAWESIGIQYSNFTLLNDWFQYTPGNAPIVLLLIILVITLLVYLTTTQRYITPNKWIALLMLVNLIGLILFPMVNDLIPLYVIIELQSYSLYLLTGVYNKSYNATRAAILYFVTGGIASVLILLSSAEVYEATGLTNLSEISTYYSISGINTWTSFDILLIALVFKMGLAPLHAWSISVYSYAPLYITAYISIVAKVSIMSFIYLNIHLFSTQLLILAFYLSVAVAAYTPLYQVNIKSILAYSGILNFGYLLTAVLTNDNAYYIYIIQYSLTHVTIFLCILAITEYTNKPASYWSPIVNVNQLVVPNKALCIALIVCLFSLIGIPPLPGFYGKYYIIVGLMSNGLNLEALTIIVFSVIATYYYAYIIKQLASNLYNNNTNVIATPINSTLGFIISILMVILITFYMYLPTLLDGLTLLHS</sequence>
<accession>Q9B8D2</accession>
<gene>
    <name type="primary">NAD2</name>
    <name evidence="4" type="ordered locus">CM_00310W</name>
    <name type="ORF">CaalfMp09</name>
</gene>
<comment type="function">
    <text evidence="1">Core subunit of the mitochondrial membrane respiratory chain NADH dehydrogenase (Complex I) that is believed to belong to the minimal assembly required for catalysis. Complex I functions in the transfer of electrons from NADH to the respiratory chain. The immediate electron acceptor for the enzyme is believed to be ubiquinone (By similarity).</text>
</comment>
<comment type="catalytic activity">
    <reaction>
        <text>a ubiquinone + NADH + 5 H(+)(in) = a ubiquinol + NAD(+) + 4 H(+)(out)</text>
        <dbReference type="Rhea" id="RHEA:29091"/>
        <dbReference type="Rhea" id="RHEA-COMP:9565"/>
        <dbReference type="Rhea" id="RHEA-COMP:9566"/>
        <dbReference type="ChEBI" id="CHEBI:15378"/>
        <dbReference type="ChEBI" id="CHEBI:16389"/>
        <dbReference type="ChEBI" id="CHEBI:17976"/>
        <dbReference type="ChEBI" id="CHEBI:57540"/>
        <dbReference type="ChEBI" id="CHEBI:57945"/>
        <dbReference type="EC" id="7.1.1.2"/>
    </reaction>
</comment>
<comment type="subcellular location">
    <subcellularLocation>
        <location evidence="1">Mitochondrion inner membrane</location>
        <topology evidence="1">Multi-pass membrane protein</topology>
    </subcellularLocation>
</comment>
<comment type="similarity">
    <text evidence="3">Belongs to the complex I subunit 2 family.</text>
</comment>